<accession>Q14K35</accession>
<evidence type="ECO:0000255" key="1">
    <source>
        <dbReference type="HAMAP-Rule" id="MF_01358"/>
    </source>
</evidence>
<organism>
    <name type="scientific">Francisella tularensis subsp. tularensis (strain FSC 198)</name>
    <dbReference type="NCBI Taxonomy" id="393115"/>
    <lineage>
        <taxon>Bacteria</taxon>
        <taxon>Pseudomonadati</taxon>
        <taxon>Pseudomonadota</taxon>
        <taxon>Gammaproteobacteria</taxon>
        <taxon>Thiotrichales</taxon>
        <taxon>Francisellaceae</taxon>
        <taxon>Francisella</taxon>
    </lineage>
</organism>
<comment type="function">
    <text evidence="1">NDH-1 shuttles electrons from NADH, via FMN and iron-sulfur (Fe-S) centers, to quinones in the respiratory chain. The immediate electron acceptor for the enzyme in this species is believed to be ubiquinone. Couples the redox reaction to proton translocation (for every two electrons transferred, four hydrogen ions are translocated across the cytoplasmic membrane), and thus conserves the redox energy in a proton gradient.</text>
</comment>
<comment type="catalytic activity">
    <reaction evidence="1">
        <text>a quinone + NADH + 5 H(+)(in) = a quinol + NAD(+) + 4 H(+)(out)</text>
        <dbReference type="Rhea" id="RHEA:57888"/>
        <dbReference type="ChEBI" id="CHEBI:15378"/>
        <dbReference type="ChEBI" id="CHEBI:24646"/>
        <dbReference type="ChEBI" id="CHEBI:57540"/>
        <dbReference type="ChEBI" id="CHEBI:57945"/>
        <dbReference type="ChEBI" id="CHEBI:132124"/>
    </reaction>
</comment>
<comment type="subunit">
    <text evidence="1">NDH-1 is composed of 14 different subunits. Subunits NuoB, C, D, E, F, and G constitute the peripheral sector of the complex.</text>
</comment>
<comment type="subcellular location">
    <subcellularLocation>
        <location evidence="1">Cell inner membrane</location>
        <topology evidence="1">Peripheral membrane protein</topology>
        <orientation evidence="1">Cytoplasmic side</orientation>
    </subcellularLocation>
</comment>
<comment type="similarity">
    <text evidence="1">Belongs to the complex I 49 kDa subunit family.</text>
</comment>
<proteinExistence type="inferred from homology"/>
<keyword id="KW-0997">Cell inner membrane</keyword>
<keyword id="KW-1003">Cell membrane</keyword>
<keyword id="KW-0472">Membrane</keyword>
<keyword id="KW-0520">NAD</keyword>
<keyword id="KW-0874">Quinone</keyword>
<keyword id="KW-1278">Translocase</keyword>
<keyword id="KW-0813">Transport</keyword>
<keyword id="KW-0830">Ubiquinone</keyword>
<feature type="chain" id="PRO_0000371871" description="NADH-quinone oxidoreductase subunit D">
    <location>
        <begin position="1"/>
        <end position="417"/>
    </location>
</feature>
<protein>
    <recommendedName>
        <fullName evidence="1">NADH-quinone oxidoreductase subunit D</fullName>
        <ecNumber evidence="1">7.1.1.-</ecNumber>
    </recommendedName>
    <alternativeName>
        <fullName evidence="1">NADH dehydrogenase I subunit D</fullName>
    </alternativeName>
    <alternativeName>
        <fullName evidence="1">NDH-1 subunit D</fullName>
    </alternativeName>
</protein>
<gene>
    <name evidence="1" type="primary">nuoD</name>
    <name type="ordered locus">FTF0034</name>
</gene>
<name>NUOD_FRAT1</name>
<reference key="1">
    <citation type="journal article" date="2007" name="PLoS ONE">
        <title>Genome sequencing shows that European isolates of Francisella tularensis subspecies tularensis are almost identical to US laboratory strain Schu S4.</title>
        <authorList>
            <person name="Chaudhuri R.R."/>
            <person name="Ren C.-P."/>
            <person name="Desmond L."/>
            <person name="Vincent G.A."/>
            <person name="Silman N.J."/>
            <person name="Brehm J.K."/>
            <person name="Elmore M.J."/>
            <person name="Hudson M.J."/>
            <person name="Forsman M."/>
            <person name="Isherwood K.E."/>
            <person name="Gurycova D."/>
            <person name="Minton N.P."/>
            <person name="Titball R.W."/>
            <person name="Pallen M.J."/>
            <person name="Vipond R."/>
        </authorList>
    </citation>
    <scope>NUCLEOTIDE SEQUENCE [LARGE SCALE GENOMIC DNA]</scope>
    <source>
        <strain>FSC 198</strain>
    </source>
</reference>
<dbReference type="EC" id="7.1.1.-" evidence="1"/>
<dbReference type="EMBL" id="AM286280">
    <property type="protein sequence ID" value="CAL08050.1"/>
    <property type="molecule type" value="Genomic_DNA"/>
</dbReference>
<dbReference type="RefSeq" id="WP_011242224.1">
    <property type="nucleotide sequence ID" value="NC_008245.1"/>
</dbReference>
<dbReference type="SMR" id="Q14K35"/>
<dbReference type="KEGG" id="ftf:FTF0034"/>
<dbReference type="HOGENOM" id="CLU_015134_1_1_6"/>
<dbReference type="GO" id="GO:0005886">
    <property type="term" value="C:plasma membrane"/>
    <property type="evidence" value="ECO:0007669"/>
    <property type="project" value="UniProtKB-SubCell"/>
</dbReference>
<dbReference type="GO" id="GO:0051287">
    <property type="term" value="F:NAD binding"/>
    <property type="evidence" value="ECO:0007669"/>
    <property type="project" value="InterPro"/>
</dbReference>
<dbReference type="GO" id="GO:0050136">
    <property type="term" value="F:NADH:ubiquinone reductase (non-electrogenic) activity"/>
    <property type="evidence" value="ECO:0007669"/>
    <property type="project" value="UniProtKB-UniRule"/>
</dbReference>
<dbReference type="GO" id="GO:0048038">
    <property type="term" value="F:quinone binding"/>
    <property type="evidence" value="ECO:0007669"/>
    <property type="project" value="UniProtKB-KW"/>
</dbReference>
<dbReference type="FunFam" id="1.10.645.10:FF:000005">
    <property type="entry name" value="NADH-quinone oxidoreductase subunit D"/>
    <property type="match status" value="1"/>
</dbReference>
<dbReference type="Gene3D" id="1.10.645.10">
    <property type="entry name" value="Cytochrome-c3 Hydrogenase, chain B"/>
    <property type="match status" value="1"/>
</dbReference>
<dbReference type="HAMAP" id="MF_01358">
    <property type="entry name" value="NDH1_NuoD"/>
    <property type="match status" value="1"/>
</dbReference>
<dbReference type="InterPro" id="IPR001135">
    <property type="entry name" value="NADH_Q_OxRdtase_suD"/>
</dbReference>
<dbReference type="InterPro" id="IPR014029">
    <property type="entry name" value="NADH_UbQ_OxRdtase_49kDa_CS"/>
</dbReference>
<dbReference type="InterPro" id="IPR022885">
    <property type="entry name" value="NDH1_su_D/H"/>
</dbReference>
<dbReference type="InterPro" id="IPR029014">
    <property type="entry name" value="NiFe-Hase_large"/>
</dbReference>
<dbReference type="NCBIfam" id="TIGR01962">
    <property type="entry name" value="NuoD"/>
    <property type="match status" value="1"/>
</dbReference>
<dbReference type="NCBIfam" id="NF004739">
    <property type="entry name" value="PRK06075.1"/>
    <property type="match status" value="1"/>
</dbReference>
<dbReference type="PANTHER" id="PTHR11993:SF10">
    <property type="entry name" value="NADH DEHYDROGENASE [UBIQUINONE] IRON-SULFUR PROTEIN 2, MITOCHONDRIAL"/>
    <property type="match status" value="1"/>
</dbReference>
<dbReference type="PANTHER" id="PTHR11993">
    <property type="entry name" value="NADH-UBIQUINONE OXIDOREDUCTASE 49 KDA SUBUNIT"/>
    <property type="match status" value="1"/>
</dbReference>
<dbReference type="Pfam" id="PF00346">
    <property type="entry name" value="Complex1_49kDa"/>
    <property type="match status" value="1"/>
</dbReference>
<dbReference type="SUPFAM" id="SSF56762">
    <property type="entry name" value="HydB/Nqo4-like"/>
    <property type="match status" value="1"/>
</dbReference>
<dbReference type="PROSITE" id="PS00535">
    <property type="entry name" value="COMPLEX1_49K"/>
    <property type="match status" value="1"/>
</dbReference>
<sequence>MAEYKNYTLNFGPVHPAAHGVLRLILELDGENVVRADPHVGLLHRGTEKLAEFKPYNQSIGYMDRLDYVSMMCNEHAYVMAIEKLLQLEVPERAKYIRVMFAEMTRILNHLLWVAACGIDLGAMTVFLYAFRVREDLFDCYEAVSGARMHAAYFRPGGVARDLPTQMPQYQKTRFTSKRKAKKLNEPRQGSMLDFLDHFVVDFEKSLDEIDTLLTDNRLWKQRTVDIGTVTAERAKELGFTGPMLRGSGVAWDLRKTQPYEVYHKLEFDIPIGANGDCYDRYLVRMAEMRESNKLIKQCVDWLRANPGPVLSDNNKVAPPKRNAMKNNMEELIHHFKLFSEGYCTTEGEVYVGTEHPKGEFGVYIKSDGANKPYRLKMRAPGFAHISAMDELLSGHMLADTPAIISTIDVVFGDVDR</sequence>